<organism>
    <name type="scientific">Arabidopsis thaliana</name>
    <name type="common">Mouse-ear cress</name>
    <dbReference type="NCBI Taxonomy" id="3702"/>
    <lineage>
        <taxon>Eukaryota</taxon>
        <taxon>Viridiplantae</taxon>
        <taxon>Streptophyta</taxon>
        <taxon>Embryophyta</taxon>
        <taxon>Tracheophyta</taxon>
        <taxon>Spermatophyta</taxon>
        <taxon>Magnoliopsida</taxon>
        <taxon>eudicotyledons</taxon>
        <taxon>Gunneridae</taxon>
        <taxon>Pentapetalae</taxon>
        <taxon>rosids</taxon>
        <taxon>malvids</taxon>
        <taxon>Brassicales</taxon>
        <taxon>Brassicaceae</taxon>
        <taxon>Camelineae</taxon>
        <taxon>Arabidopsis</taxon>
    </lineage>
</organism>
<reference key="1">
    <citation type="journal article" date="2003" name="Plant Physiol.">
        <title>Arabidopsis contains a large superfamily of acyl-activating enzymes. Phylogenetic and biochemical analysis reveals a new class of acyl-coenzyme a synthetases.</title>
        <authorList>
            <person name="Shockey J.M."/>
            <person name="Fulda M.S."/>
            <person name="Browse J."/>
        </authorList>
    </citation>
    <scope>NUCLEOTIDE SEQUENCE [MRNA]</scope>
    <scope>GENE FAMILY ORGANIZATION</scope>
    <source>
        <strain>cv. Wassilewskija</strain>
    </source>
</reference>
<reference key="2">
    <citation type="journal article" date="2000" name="Nature">
        <title>Sequence and analysis of chromosome 1 of the plant Arabidopsis thaliana.</title>
        <authorList>
            <person name="Theologis A."/>
            <person name="Ecker J.R."/>
            <person name="Palm C.J."/>
            <person name="Federspiel N.A."/>
            <person name="Kaul S."/>
            <person name="White O."/>
            <person name="Alonso J."/>
            <person name="Altafi H."/>
            <person name="Araujo R."/>
            <person name="Bowman C.L."/>
            <person name="Brooks S.Y."/>
            <person name="Buehler E."/>
            <person name="Chan A."/>
            <person name="Chao Q."/>
            <person name="Chen H."/>
            <person name="Cheuk R.F."/>
            <person name="Chin C.W."/>
            <person name="Chung M.K."/>
            <person name="Conn L."/>
            <person name="Conway A.B."/>
            <person name="Conway A.R."/>
            <person name="Creasy T.H."/>
            <person name="Dewar K."/>
            <person name="Dunn P."/>
            <person name="Etgu P."/>
            <person name="Feldblyum T.V."/>
            <person name="Feng J.-D."/>
            <person name="Fong B."/>
            <person name="Fujii C.Y."/>
            <person name="Gill J.E."/>
            <person name="Goldsmith A.D."/>
            <person name="Haas B."/>
            <person name="Hansen N.F."/>
            <person name="Hughes B."/>
            <person name="Huizar L."/>
            <person name="Hunter J.L."/>
            <person name="Jenkins J."/>
            <person name="Johnson-Hopson C."/>
            <person name="Khan S."/>
            <person name="Khaykin E."/>
            <person name="Kim C.J."/>
            <person name="Koo H.L."/>
            <person name="Kremenetskaia I."/>
            <person name="Kurtz D.B."/>
            <person name="Kwan A."/>
            <person name="Lam B."/>
            <person name="Langin-Hooper S."/>
            <person name="Lee A."/>
            <person name="Lee J.M."/>
            <person name="Lenz C.A."/>
            <person name="Li J.H."/>
            <person name="Li Y.-P."/>
            <person name="Lin X."/>
            <person name="Liu S.X."/>
            <person name="Liu Z.A."/>
            <person name="Luros J.S."/>
            <person name="Maiti R."/>
            <person name="Marziali A."/>
            <person name="Militscher J."/>
            <person name="Miranda M."/>
            <person name="Nguyen M."/>
            <person name="Nierman W.C."/>
            <person name="Osborne B.I."/>
            <person name="Pai G."/>
            <person name="Peterson J."/>
            <person name="Pham P.K."/>
            <person name="Rizzo M."/>
            <person name="Rooney T."/>
            <person name="Rowley D."/>
            <person name="Sakano H."/>
            <person name="Salzberg S.L."/>
            <person name="Schwartz J.R."/>
            <person name="Shinn P."/>
            <person name="Southwick A.M."/>
            <person name="Sun H."/>
            <person name="Tallon L.J."/>
            <person name="Tambunga G."/>
            <person name="Toriumi M.J."/>
            <person name="Town C.D."/>
            <person name="Utterback T."/>
            <person name="Van Aken S."/>
            <person name="Vaysberg M."/>
            <person name="Vysotskaia V.S."/>
            <person name="Walker M."/>
            <person name="Wu D."/>
            <person name="Yu G."/>
            <person name="Fraser C.M."/>
            <person name="Venter J.C."/>
            <person name="Davis R.W."/>
        </authorList>
    </citation>
    <scope>NUCLEOTIDE SEQUENCE [LARGE SCALE GENOMIC DNA]</scope>
    <source>
        <strain>cv. Columbia</strain>
    </source>
</reference>
<reference key="3">
    <citation type="journal article" date="2017" name="Plant J.">
        <title>Araport11: a complete reannotation of the Arabidopsis thaliana reference genome.</title>
        <authorList>
            <person name="Cheng C.Y."/>
            <person name="Krishnakumar V."/>
            <person name="Chan A.P."/>
            <person name="Thibaud-Nissen F."/>
            <person name="Schobel S."/>
            <person name="Town C.D."/>
        </authorList>
    </citation>
    <scope>GENOME REANNOTATION</scope>
    <source>
        <strain>cv. Columbia</strain>
    </source>
</reference>
<reference key="4">
    <citation type="journal article" date="2003" name="Proc. Natl. Acad. Sci. U.S.A.">
        <title>The substrate specificity-determining amino acid code of 4-coumarate:CoA ligase.</title>
        <authorList>
            <person name="Schneider K."/>
            <person name="Hoevel K."/>
            <person name="Witzel K."/>
            <person name="Hamberger B."/>
            <person name="Schomburg D."/>
            <person name="Kombrink E."/>
            <person name="Stuible H.-P."/>
        </authorList>
    </citation>
    <scope>GENE FAMILY ORGANIZATION</scope>
</reference>
<keyword id="KW-0067">ATP-binding</keyword>
<keyword id="KW-0436">Ligase</keyword>
<keyword id="KW-0460">Magnesium</keyword>
<keyword id="KW-0547">Nucleotide-binding</keyword>
<keyword id="KW-0576">Peroxisome</keyword>
<keyword id="KW-1185">Reference proteome</keyword>
<gene>
    <name evidence="4" type="primary">4CLL2</name>
    <name evidence="6" type="ordered locus">At1g20480</name>
    <name evidence="7" type="ORF">F5M15.29</name>
</gene>
<comment type="function">
    <text evidence="1">Carboxylate--CoA ligase that may use 4-coumarate as substrate. Follows a two-step reaction mechanism, wherein the carboxylate substrate first undergoes adenylation by ATP, followed by a thioesterification in the presence of CoA to yield the final CoA thioester.</text>
</comment>
<comment type="catalytic activity">
    <reaction evidence="1">
        <text>(E)-4-coumarate + ATP + CoA = (E)-4-coumaroyl-CoA + AMP + diphosphate</text>
        <dbReference type="Rhea" id="RHEA:19641"/>
        <dbReference type="ChEBI" id="CHEBI:12876"/>
        <dbReference type="ChEBI" id="CHEBI:30616"/>
        <dbReference type="ChEBI" id="CHEBI:33019"/>
        <dbReference type="ChEBI" id="CHEBI:57287"/>
        <dbReference type="ChEBI" id="CHEBI:85008"/>
        <dbReference type="ChEBI" id="CHEBI:456215"/>
        <dbReference type="EC" id="6.2.1.12"/>
    </reaction>
    <physiologicalReaction direction="left-to-right" evidence="1">
        <dbReference type="Rhea" id="RHEA:19642"/>
    </physiologicalReaction>
</comment>
<comment type="catalytic activity">
    <reaction evidence="1">
        <text>(E)-4-coumarate + ATP + H(+) = (E)-4-coumaroyl-AMP + diphosphate</text>
        <dbReference type="Rhea" id="RHEA:72419"/>
        <dbReference type="ChEBI" id="CHEBI:12876"/>
        <dbReference type="ChEBI" id="CHEBI:15378"/>
        <dbReference type="ChEBI" id="CHEBI:30616"/>
        <dbReference type="ChEBI" id="CHEBI:33019"/>
        <dbReference type="ChEBI" id="CHEBI:192348"/>
    </reaction>
    <physiologicalReaction direction="left-to-right" evidence="1">
        <dbReference type="Rhea" id="RHEA:72420"/>
    </physiologicalReaction>
</comment>
<comment type="catalytic activity">
    <reaction evidence="1">
        <text>(E)-4-coumaroyl-AMP + CoA = (E)-4-coumaroyl-CoA + AMP + H(+)</text>
        <dbReference type="Rhea" id="RHEA:72423"/>
        <dbReference type="ChEBI" id="CHEBI:15378"/>
        <dbReference type="ChEBI" id="CHEBI:57287"/>
        <dbReference type="ChEBI" id="CHEBI:85008"/>
        <dbReference type="ChEBI" id="CHEBI:192348"/>
        <dbReference type="ChEBI" id="CHEBI:456215"/>
    </reaction>
    <physiologicalReaction direction="left-to-right" evidence="1">
        <dbReference type="Rhea" id="RHEA:72424"/>
    </physiologicalReaction>
</comment>
<comment type="cofactor">
    <cofactor evidence="1">
        <name>Mg(2+)</name>
        <dbReference type="ChEBI" id="CHEBI:18420"/>
    </cofactor>
</comment>
<comment type="subcellular location">
    <subcellularLocation>
        <location evidence="5">Peroxisome</location>
    </subcellularLocation>
</comment>
<comment type="domain">
    <text evidence="2">Both substrate-binding domains (SBD1 and SBD2) are involved in the substrate recognition, and are sufficient to confer the substrate specificity.</text>
</comment>
<comment type="similarity">
    <text evidence="5">Belongs to the ATP-dependent AMP-binding enzyme family.</text>
</comment>
<comment type="sequence caution" evidence="5">
    <conflict type="erroneous gene model prediction">
        <sequence resource="EMBL-CDS" id="AAF79612"/>
    </conflict>
    <text>The predicted gene has been split into 3 genes: At1g20480, At1g20490 and At1g20500.</text>
</comment>
<protein>
    <recommendedName>
        <fullName evidence="4">4-coumarate--CoA ligase-like 2</fullName>
        <ecNumber evidence="1">6.2.1.12</ecNumber>
    </recommendedName>
</protein>
<dbReference type="EC" id="6.2.1.12" evidence="1"/>
<dbReference type="EMBL" id="AY250833">
    <property type="protein sequence ID" value="AAP03016.1"/>
    <property type="molecule type" value="mRNA"/>
</dbReference>
<dbReference type="EMBL" id="AC027665">
    <property type="protein sequence ID" value="AAF79612.1"/>
    <property type="status" value="ALT_SEQ"/>
    <property type="molecule type" value="Genomic_DNA"/>
</dbReference>
<dbReference type="EMBL" id="CP002684">
    <property type="protein sequence ID" value="AEE29977.1"/>
    <property type="molecule type" value="Genomic_DNA"/>
</dbReference>
<dbReference type="PIR" id="D86338">
    <property type="entry name" value="D86338"/>
</dbReference>
<dbReference type="RefSeq" id="NP_173472.1">
    <property type="nucleotide sequence ID" value="NM_101898.4"/>
</dbReference>
<dbReference type="SMR" id="Q84P25"/>
<dbReference type="BioGRID" id="23875">
    <property type="interactions" value="2"/>
</dbReference>
<dbReference type="FunCoup" id="Q84P25">
    <property type="interactions" value="647"/>
</dbReference>
<dbReference type="IntAct" id="Q84P25">
    <property type="interactions" value="3"/>
</dbReference>
<dbReference type="STRING" id="3702.Q84P25"/>
<dbReference type="iPTMnet" id="Q84P25"/>
<dbReference type="PaxDb" id="3702-AT1G20480.1"/>
<dbReference type="ProteomicsDB" id="245163"/>
<dbReference type="EnsemblPlants" id="AT1G20480.1">
    <property type="protein sequence ID" value="AT1G20480.1"/>
    <property type="gene ID" value="AT1G20480"/>
</dbReference>
<dbReference type="GeneID" id="838636"/>
<dbReference type="Gramene" id="AT1G20480.1">
    <property type="protein sequence ID" value="AT1G20480.1"/>
    <property type="gene ID" value="AT1G20480"/>
</dbReference>
<dbReference type="KEGG" id="ath:AT1G20480"/>
<dbReference type="Araport" id="AT1G20480"/>
<dbReference type="TAIR" id="AT1G20480"/>
<dbReference type="eggNOG" id="KOG1176">
    <property type="taxonomic scope" value="Eukaryota"/>
</dbReference>
<dbReference type="HOGENOM" id="CLU_000022_59_2_1"/>
<dbReference type="InParanoid" id="Q84P25"/>
<dbReference type="OMA" id="RTICTIP"/>
<dbReference type="OrthoDB" id="2962993at2759"/>
<dbReference type="PhylomeDB" id="Q84P25"/>
<dbReference type="BioCyc" id="ARA:AT1G20480-MONOMER"/>
<dbReference type="CD-CODE" id="4299E36E">
    <property type="entry name" value="Nucleolus"/>
</dbReference>
<dbReference type="PRO" id="PR:Q84P25"/>
<dbReference type="Proteomes" id="UP000006548">
    <property type="component" value="Chromosome 1"/>
</dbReference>
<dbReference type="ExpressionAtlas" id="Q84P25">
    <property type="expression patterns" value="baseline and differential"/>
</dbReference>
<dbReference type="GO" id="GO:0005777">
    <property type="term" value="C:peroxisome"/>
    <property type="evidence" value="ECO:0007669"/>
    <property type="project" value="UniProtKB-SubCell"/>
</dbReference>
<dbReference type="GO" id="GO:0016207">
    <property type="term" value="F:4-coumarate-CoA ligase activity"/>
    <property type="evidence" value="ECO:0007669"/>
    <property type="project" value="RHEA"/>
</dbReference>
<dbReference type="GO" id="GO:0005524">
    <property type="term" value="F:ATP binding"/>
    <property type="evidence" value="ECO:0007669"/>
    <property type="project" value="UniProtKB-KW"/>
</dbReference>
<dbReference type="CDD" id="cd05904">
    <property type="entry name" value="4CL"/>
    <property type="match status" value="1"/>
</dbReference>
<dbReference type="FunFam" id="3.30.300.30:FF:000007">
    <property type="entry name" value="4-coumarate--CoA ligase 2"/>
    <property type="match status" value="1"/>
</dbReference>
<dbReference type="FunFam" id="3.40.50.12780:FF:000003">
    <property type="entry name" value="Long-chain-fatty-acid--CoA ligase FadD"/>
    <property type="match status" value="1"/>
</dbReference>
<dbReference type="Gene3D" id="3.30.300.30">
    <property type="match status" value="1"/>
</dbReference>
<dbReference type="Gene3D" id="3.40.50.12780">
    <property type="entry name" value="N-terminal domain of ligase-like"/>
    <property type="match status" value="1"/>
</dbReference>
<dbReference type="InterPro" id="IPR025110">
    <property type="entry name" value="AMP-bd_C"/>
</dbReference>
<dbReference type="InterPro" id="IPR045851">
    <property type="entry name" value="AMP-bd_C_sf"/>
</dbReference>
<dbReference type="InterPro" id="IPR020845">
    <property type="entry name" value="AMP-binding_CS"/>
</dbReference>
<dbReference type="InterPro" id="IPR000873">
    <property type="entry name" value="AMP-dep_synth/lig_dom"/>
</dbReference>
<dbReference type="InterPro" id="IPR042099">
    <property type="entry name" value="ANL_N_sf"/>
</dbReference>
<dbReference type="PANTHER" id="PTHR24096:SF345">
    <property type="entry name" value="4-COUMARATE--COA LIGASE-LIKE 2"/>
    <property type="match status" value="1"/>
</dbReference>
<dbReference type="PANTHER" id="PTHR24096">
    <property type="entry name" value="LONG-CHAIN-FATTY-ACID--COA LIGASE"/>
    <property type="match status" value="1"/>
</dbReference>
<dbReference type="Pfam" id="PF00501">
    <property type="entry name" value="AMP-binding"/>
    <property type="match status" value="1"/>
</dbReference>
<dbReference type="Pfam" id="PF13193">
    <property type="entry name" value="AMP-binding_C"/>
    <property type="match status" value="1"/>
</dbReference>
<dbReference type="SUPFAM" id="SSF56801">
    <property type="entry name" value="Acetyl-CoA synthetase-like"/>
    <property type="match status" value="1"/>
</dbReference>
<dbReference type="PROSITE" id="PS00455">
    <property type="entry name" value="AMP_BINDING"/>
    <property type="match status" value="1"/>
</dbReference>
<name>4CLL2_ARATH</name>
<proteinExistence type="evidence at transcript level"/>
<evidence type="ECO:0000250" key="1">
    <source>
        <dbReference type="UniProtKB" id="O24146"/>
    </source>
</evidence>
<evidence type="ECO:0000250" key="2">
    <source>
        <dbReference type="UniProtKB" id="Q42524"/>
    </source>
</evidence>
<evidence type="ECO:0000255" key="3"/>
<evidence type="ECO:0000303" key="4">
    <source>
    </source>
</evidence>
<evidence type="ECO:0000305" key="5"/>
<evidence type="ECO:0000312" key="6">
    <source>
        <dbReference type="Araport" id="AT1G20480"/>
    </source>
</evidence>
<evidence type="ECO:0000312" key="7">
    <source>
        <dbReference type="EMBL" id="AAF79612.1"/>
    </source>
</evidence>
<accession>Q84P25</accession>
<accession>Q9LMV7</accession>
<feature type="chain" id="PRO_0000299175" description="4-coumarate--CoA ligase-like 2">
    <location>
        <begin position="1"/>
        <end position="565"/>
    </location>
</feature>
<feature type="region of interest" description="SBD1" evidence="2">
    <location>
        <begin position="288"/>
        <end position="359"/>
    </location>
</feature>
<feature type="region of interest" description="SBD2" evidence="2">
    <location>
        <begin position="360"/>
        <end position="424"/>
    </location>
</feature>
<feature type="short sequence motif" description="Microbody targeting signal" evidence="3">
    <location>
        <begin position="563"/>
        <end position="565"/>
    </location>
</feature>
<feature type="binding site" evidence="1">
    <location>
        <position position="221"/>
    </location>
    <ligand>
        <name>ATP</name>
        <dbReference type="ChEBI" id="CHEBI:30616"/>
    </ligand>
</feature>
<feature type="binding site" evidence="1">
    <location>
        <position position="222"/>
    </location>
    <ligand>
        <name>ATP</name>
        <dbReference type="ChEBI" id="CHEBI:30616"/>
    </ligand>
</feature>
<feature type="binding site" evidence="1">
    <location>
        <position position="223"/>
    </location>
    <ligand>
        <name>ATP</name>
        <dbReference type="ChEBI" id="CHEBI:30616"/>
    </ligand>
</feature>
<feature type="binding site" evidence="1">
    <location>
        <position position="224"/>
    </location>
    <ligand>
        <name>ATP</name>
        <dbReference type="ChEBI" id="CHEBI:30616"/>
    </ligand>
</feature>
<feature type="binding site" evidence="1">
    <location>
        <position position="225"/>
    </location>
    <ligand>
        <name>ATP</name>
        <dbReference type="ChEBI" id="CHEBI:30616"/>
    </ligand>
</feature>
<feature type="binding site" evidence="1">
    <location>
        <position position="229"/>
    </location>
    <ligand>
        <name>ATP</name>
        <dbReference type="ChEBI" id="CHEBI:30616"/>
    </ligand>
</feature>
<feature type="binding site" evidence="1">
    <location>
        <position position="265"/>
    </location>
    <ligand>
        <name>(E)-4-coumaroyl-AMP</name>
        <dbReference type="ChEBI" id="CHEBI:192348"/>
    </ligand>
</feature>
<feature type="binding site" evidence="1">
    <location>
        <position position="286"/>
    </location>
    <ligand>
        <name>CoA</name>
        <dbReference type="ChEBI" id="CHEBI:57287"/>
    </ligand>
</feature>
<feature type="binding site" evidence="1">
    <location>
        <position position="337"/>
    </location>
    <ligand>
        <name>(E)-4-coumaroyl-AMP</name>
        <dbReference type="ChEBI" id="CHEBI:192348"/>
    </ligand>
</feature>
<feature type="binding site" evidence="1">
    <location>
        <position position="359"/>
    </location>
    <ligand>
        <name>(E)-4-coumaroyl-AMP</name>
        <dbReference type="ChEBI" id="CHEBI:192348"/>
    </ligand>
</feature>
<feature type="binding site" evidence="1">
    <location>
        <position position="359"/>
    </location>
    <ligand>
        <name>ATP</name>
        <dbReference type="ChEBI" id="CHEBI:30616"/>
    </ligand>
</feature>
<feature type="binding site" evidence="1">
    <location>
        <position position="360"/>
    </location>
    <ligand>
        <name>(E)-4-coumaroyl-AMP</name>
        <dbReference type="ChEBI" id="CHEBI:192348"/>
    </ligand>
</feature>
<feature type="binding site" evidence="1">
    <location>
        <position position="360"/>
    </location>
    <ligand>
        <name>ATP</name>
        <dbReference type="ChEBI" id="CHEBI:30616"/>
    </ligand>
</feature>
<feature type="binding site" evidence="1">
    <location>
        <position position="364"/>
    </location>
    <ligand>
        <name>(E)-4-coumaroyl-AMP</name>
        <dbReference type="ChEBI" id="CHEBI:192348"/>
    </ligand>
</feature>
<feature type="binding site" evidence="1">
    <location>
        <position position="364"/>
    </location>
    <ligand>
        <name>ATP</name>
        <dbReference type="ChEBI" id="CHEBI:30616"/>
    </ligand>
</feature>
<feature type="binding site" evidence="1">
    <location>
        <position position="445"/>
    </location>
    <ligand>
        <name>ATP</name>
        <dbReference type="ChEBI" id="CHEBI:30616"/>
    </ligand>
</feature>
<feature type="binding site" evidence="1">
    <location>
        <position position="460"/>
    </location>
    <ligand>
        <name>ATP</name>
        <dbReference type="ChEBI" id="CHEBI:30616"/>
    </ligand>
</feature>
<feature type="binding site" evidence="1">
    <location>
        <position position="462"/>
    </location>
    <ligand>
        <name>(E)-4-coumaroyl-AMP</name>
        <dbReference type="ChEBI" id="CHEBI:192348"/>
    </ligand>
</feature>
<feature type="binding site" evidence="1">
    <location>
        <position position="466"/>
    </location>
    <ligand>
        <name>(E)-4-coumaroyl-AMP</name>
        <dbReference type="ChEBI" id="CHEBI:192348"/>
    </ligand>
</feature>
<feature type="binding site" evidence="1">
    <location>
        <position position="469"/>
    </location>
    <ligand>
        <name>CoA</name>
        <dbReference type="ChEBI" id="CHEBI:57287"/>
    </ligand>
</feature>
<feature type="binding site" evidence="1">
    <location>
        <position position="551"/>
    </location>
    <ligand>
        <name>ATP</name>
        <dbReference type="ChEBI" id="CHEBI:30616"/>
    </ligand>
</feature>
<feature type="sequence conflict" description="In Ref. 1; AAP03016." evidence="5" ref="1">
    <original>E</original>
    <variation>V</variation>
    <location>
        <position position="13"/>
    </location>
</feature>
<feature type="sequence conflict" description="In Ref. 1; AAP03016." evidence="5" ref="1">
    <original>R</original>
    <variation>Q</variation>
    <location>
        <position position="74"/>
    </location>
</feature>
<feature type="sequence conflict" description="In Ref. 1; AAP03016." evidence="5" ref="1">
    <original>S</original>
    <variation>T</variation>
    <location>
        <position position="182"/>
    </location>
</feature>
<feature type="sequence conflict" description="In Ref. 1; AAP03016." evidence="5" ref="1">
    <original>V</original>
    <variation>F</variation>
    <location>
        <position position="355"/>
    </location>
</feature>
<feature type="sequence conflict" description="In Ref. 1; AAP03016." evidence="5" ref="1">
    <original>M</original>
    <variation>V</variation>
    <location>
        <position position="505"/>
    </location>
</feature>
<sequence>MAVKHGVDGDGSEIESRTLAVDRKSGFCESTSIFYSKREPMALPPNQFLDVTSFIASQPHRGKTVFVDAVTGRRLSFPELWLGVERVAGCLYALGVRKGNVVIILSPNSILFPIVSLSVMSLGAIITTANPINTSDEISKQIGDSRPVLAFTTCKLVSKLAAASNFNLPVVLMDDYHVPSQSYGDRVKLVGRLETMIETEPSESRVKQRVNQDDTAALLYSSGTTGTSKGVMLSHRNLIALVQAYRARFGLEQRTICTIPMCHIFGFGGFATGLIALGWTIVVLPKFDMAKLLSAVETHRSSYLSLVPPIVVAMVNGANEINSKYDLSSLHTVVAGGAPLSREVTEKFVENYPKVKILQGYGLTESTAIAASMFNKEETKRYGASGLLAPNVEGKIVDPDTGRVLGVNQTGELWIRSPTVMKGYFKNKEATASTIDSEGWLKTGDLCYIDGDGFVFVVDRLKELIKCNGYQVAPAELEALLLAHPEIADAAVIPIPDMKAGQYPMAYIVRKVGSNLSESEIMGFVAKQVSPYKKIRKVTFLASIPKNPSGKILRRELTKLTTSKL</sequence>